<evidence type="ECO:0000255" key="1">
    <source>
        <dbReference type="HAMAP-Rule" id="MF_00381"/>
    </source>
</evidence>
<evidence type="ECO:0000256" key="2">
    <source>
        <dbReference type="SAM" id="MobiDB-lite"/>
    </source>
</evidence>
<keyword id="KW-0233">DNA recombination</keyword>
<keyword id="KW-0238">DNA-binding</keyword>
<keyword id="KW-0804">Transcription</keyword>
<keyword id="KW-0805">Transcription regulation</keyword>
<keyword id="KW-0810">Translation regulation</keyword>
<sequence>MTKSELVAQLAARFPQLVLKDADFAVKTMLDAMSEALANGHRIEIRGFGSFGLNRRPSRVGRNPKSGEKVLVPEKYVPHFKPGKELRERVDRRAGEPLKAEEPDDDL</sequence>
<feature type="chain" id="PRO_1000122202" description="Integration host factor subunit beta">
    <location>
        <begin position="1"/>
        <end position="107"/>
    </location>
</feature>
<feature type="region of interest" description="Disordered" evidence="2">
    <location>
        <begin position="82"/>
        <end position="107"/>
    </location>
</feature>
<feature type="compositionally biased region" description="Basic and acidic residues" evidence="2">
    <location>
        <begin position="82"/>
        <end position="101"/>
    </location>
</feature>
<proteinExistence type="inferred from homology"/>
<gene>
    <name evidence="1" type="primary">ihfB</name>
    <name evidence="1" type="synonym">himD</name>
    <name type="ordered locus">Bphyt_3000</name>
</gene>
<accession>B2T634</accession>
<comment type="function">
    <text evidence="1">This protein is one of the two subunits of integration host factor, a specific DNA-binding protein that functions in genetic recombination as well as in transcriptional and translational control.</text>
</comment>
<comment type="subunit">
    <text evidence="1">Heterodimer of an alpha and a beta chain.</text>
</comment>
<comment type="similarity">
    <text evidence="1">Belongs to the bacterial histone-like protein family.</text>
</comment>
<name>IHFB_PARPJ</name>
<dbReference type="EMBL" id="CP001052">
    <property type="protein sequence ID" value="ACD17394.1"/>
    <property type="molecule type" value="Genomic_DNA"/>
</dbReference>
<dbReference type="RefSeq" id="WP_012433973.1">
    <property type="nucleotide sequence ID" value="NC_010681.1"/>
</dbReference>
<dbReference type="SMR" id="B2T634"/>
<dbReference type="STRING" id="398527.Bphyt_3000"/>
<dbReference type="KEGG" id="bpy:Bphyt_3000"/>
<dbReference type="eggNOG" id="COG0776">
    <property type="taxonomic scope" value="Bacteria"/>
</dbReference>
<dbReference type="HOGENOM" id="CLU_105066_2_0_4"/>
<dbReference type="OrthoDB" id="9804203at2"/>
<dbReference type="Proteomes" id="UP000001739">
    <property type="component" value="Chromosome 1"/>
</dbReference>
<dbReference type="GO" id="GO:0005694">
    <property type="term" value="C:chromosome"/>
    <property type="evidence" value="ECO:0007669"/>
    <property type="project" value="InterPro"/>
</dbReference>
<dbReference type="GO" id="GO:0005829">
    <property type="term" value="C:cytosol"/>
    <property type="evidence" value="ECO:0007669"/>
    <property type="project" value="TreeGrafter"/>
</dbReference>
<dbReference type="GO" id="GO:0003677">
    <property type="term" value="F:DNA binding"/>
    <property type="evidence" value="ECO:0007669"/>
    <property type="project" value="UniProtKB-UniRule"/>
</dbReference>
<dbReference type="GO" id="GO:0030527">
    <property type="term" value="F:structural constituent of chromatin"/>
    <property type="evidence" value="ECO:0007669"/>
    <property type="project" value="InterPro"/>
</dbReference>
<dbReference type="GO" id="GO:0006310">
    <property type="term" value="P:DNA recombination"/>
    <property type="evidence" value="ECO:0007669"/>
    <property type="project" value="UniProtKB-UniRule"/>
</dbReference>
<dbReference type="GO" id="GO:0006355">
    <property type="term" value="P:regulation of DNA-templated transcription"/>
    <property type="evidence" value="ECO:0007669"/>
    <property type="project" value="UniProtKB-UniRule"/>
</dbReference>
<dbReference type="GO" id="GO:0006417">
    <property type="term" value="P:regulation of translation"/>
    <property type="evidence" value="ECO:0007669"/>
    <property type="project" value="UniProtKB-UniRule"/>
</dbReference>
<dbReference type="CDD" id="cd13836">
    <property type="entry name" value="IHF_B"/>
    <property type="match status" value="1"/>
</dbReference>
<dbReference type="Gene3D" id="4.10.520.10">
    <property type="entry name" value="IHF-like DNA-binding proteins"/>
    <property type="match status" value="1"/>
</dbReference>
<dbReference type="HAMAP" id="MF_00381">
    <property type="entry name" value="IHF_beta"/>
    <property type="match status" value="1"/>
</dbReference>
<dbReference type="InterPro" id="IPR000119">
    <property type="entry name" value="Hist_DNA-bd"/>
</dbReference>
<dbReference type="InterPro" id="IPR010992">
    <property type="entry name" value="IHF-like_DNA-bd_dom_sf"/>
</dbReference>
<dbReference type="InterPro" id="IPR005685">
    <property type="entry name" value="IHF_beta"/>
</dbReference>
<dbReference type="NCBIfam" id="TIGR00988">
    <property type="entry name" value="hip"/>
    <property type="match status" value="1"/>
</dbReference>
<dbReference type="NCBIfam" id="NF001222">
    <property type="entry name" value="PRK00199.1"/>
    <property type="match status" value="1"/>
</dbReference>
<dbReference type="PANTHER" id="PTHR33175">
    <property type="entry name" value="DNA-BINDING PROTEIN HU"/>
    <property type="match status" value="1"/>
</dbReference>
<dbReference type="PANTHER" id="PTHR33175:SF5">
    <property type="entry name" value="INTEGRATION HOST FACTOR SUBUNIT BETA"/>
    <property type="match status" value="1"/>
</dbReference>
<dbReference type="Pfam" id="PF00216">
    <property type="entry name" value="Bac_DNA_binding"/>
    <property type="match status" value="1"/>
</dbReference>
<dbReference type="PRINTS" id="PR01727">
    <property type="entry name" value="DNABINDINGHU"/>
</dbReference>
<dbReference type="SMART" id="SM00411">
    <property type="entry name" value="BHL"/>
    <property type="match status" value="1"/>
</dbReference>
<dbReference type="SUPFAM" id="SSF47729">
    <property type="entry name" value="IHF-like DNA-binding proteins"/>
    <property type="match status" value="1"/>
</dbReference>
<protein>
    <recommendedName>
        <fullName evidence="1">Integration host factor subunit beta</fullName>
        <shortName evidence="1">IHF-beta</shortName>
    </recommendedName>
</protein>
<organism>
    <name type="scientific">Paraburkholderia phytofirmans (strain DSM 17436 / LMG 22146 / PsJN)</name>
    <name type="common">Burkholderia phytofirmans</name>
    <dbReference type="NCBI Taxonomy" id="398527"/>
    <lineage>
        <taxon>Bacteria</taxon>
        <taxon>Pseudomonadati</taxon>
        <taxon>Pseudomonadota</taxon>
        <taxon>Betaproteobacteria</taxon>
        <taxon>Burkholderiales</taxon>
        <taxon>Burkholderiaceae</taxon>
        <taxon>Paraburkholderia</taxon>
    </lineage>
</organism>
<reference key="1">
    <citation type="journal article" date="2011" name="J. Bacteriol.">
        <title>Complete genome sequence of the plant growth-promoting endophyte Burkholderia phytofirmans strain PsJN.</title>
        <authorList>
            <person name="Weilharter A."/>
            <person name="Mitter B."/>
            <person name="Shin M.V."/>
            <person name="Chain P.S."/>
            <person name="Nowak J."/>
            <person name="Sessitsch A."/>
        </authorList>
    </citation>
    <scope>NUCLEOTIDE SEQUENCE [LARGE SCALE GENOMIC DNA]</scope>
    <source>
        <strain>DSM 17436 / LMG 22146 / PsJN</strain>
    </source>
</reference>